<accession>P0C037</accession>
<accession>P36768</accession>
<accession>P77343</accession>
<accession>Q2MC34</accession>
<comment type="function">
    <text evidence="2">Catalyzes the phosphorolysis of diverse nucleosides, yielding D-ribose 1-phosphate and the respective free bases. Can use uridine, adenosine, guanosine, cytidine, thymidine, inosine and xanthosine as substrates. Also catalyzes the reverse reactions. Is not able to produce D-ribose 1-phosphate from D-ribose and phosphate.</text>
</comment>
<comment type="catalytic activity">
    <reaction evidence="2">
        <text>a purine D-ribonucleoside + phosphate = a purine nucleobase + alpha-D-ribose 1-phosphate</text>
        <dbReference type="Rhea" id="RHEA:19805"/>
        <dbReference type="ChEBI" id="CHEBI:26386"/>
        <dbReference type="ChEBI" id="CHEBI:43474"/>
        <dbReference type="ChEBI" id="CHEBI:57720"/>
        <dbReference type="ChEBI" id="CHEBI:142355"/>
        <dbReference type="EC" id="2.4.2.1"/>
    </reaction>
</comment>
<comment type="catalytic activity">
    <reaction evidence="2">
        <text>adenosine + phosphate = alpha-D-ribose 1-phosphate + adenine</text>
        <dbReference type="Rhea" id="RHEA:27642"/>
        <dbReference type="ChEBI" id="CHEBI:16335"/>
        <dbReference type="ChEBI" id="CHEBI:16708"/>
        <dbReference type="ChEBI" id="CHEBI:43474"/>
        <dbReference type="ChEBI" id="CHEBI:57720"/>
        <dbReference type="EC" id="2.4.2.1"/>
    </reaction>
</comment>
<comment type="catalytic activity">
    <reaction evidence="2">
        <text>cytidine + phosphate = cytosine + alpha-D-ribose 1-phosphate</text>
        <dbReference type="Rhea" id="RHEA:52540"/>
        <dbReference type="ChEBI" id="CHEBI:16040"/>
        <dbReference type="ChEBI" id="CHEBI:17562"/>
        <dbReference type="ChEBI" id="CHEBI:43474"/>
        <dbReference type="ChEBI" id="CHEBI:57720"/>
        <dbReference type="EC" id="2.4.2.2"/>
    </reaction>
</comment>
<comment type="catalytic activity">
    <reaction evidence="2">
        <text>guanosine + phosphate = alpha-D-ribose 1-phosphate + guanine</text>
        <dbReference type="Rhea" id="RHEA:13233"/>
        <dbReference type="ChEBI" id="CHEBI:16235"/>
        <dbReference type="ChEBI" id="CHEBI:16750"/>
        <dbReference type="ChEBI" id="CHEBI:43474"/>
        <dbReference type="ChEBI" id="CHEBI:57720"/>
        <dbReference type="EC" id="2.4.2.1"/>
    </reaction>
</comment>
<comment type="catalytic activity">
    <reaction evidence="2">
        <text>inosine + phosphate = alpha-D-ribose 1-phosphate + hypoxanthine</text>
        <dbReference type="Rhea" id="RHEA:27646"/>
        <dbReference type="ChEBI" id="CHEBI:17368"/>
        <dbReference type="ChEBI" id="CHEBI:17596"/>
        <dbReference type="ChEBI" id="CHEBI:43474"/>
        <dbReference type="ChEBI" id="CHEBI:57720"/>
        <dbReference type="EC" id="2.4.2.1"/>
    </reaction>
</comment>
<comment type="catalytic activity">
    <reaction evidence="2">
        <text>thymidine + phosphate = 2-deoxy-alpha-D-ribose 1-phosphate + thymine</text>
        <dbReference type="Rhea" id="RHEA:16037"/>
        <dbReference type="ChEBI" id="CHEBI:17748"/>
        <dbReference type="ChEBI" id="CHEBI:17821"/>
        <dbReference type="ChEBI" id="CHEBI:43474"/>
        <dbReference type="ChEBI" id="CHEBI:57259"/>
        <dbReference type="EC" id="2.4.2.2"/>
    </reaction>
</comment>
<comment type="catalytic activity">
    <reaction evidence="2">
        <text>uridine + phosphate = alpha-D-ribose 1-phosphate + uracil</text>
        <dbReference type="Rhea" id="RHEA:24388"/>
        <dbReference type="ChEBI" id="CHEBI:16704"/>
        <dbReference type="ChEBI" id="CHEBI:17568"/>
        <dbReference type="ChEBI" id="CHEBI:43474"/>
        <dbReference type="ChEBI" id="CHEBI:57720"/>
        <dbReference type="EC" id="2.4.2.2"/>
    </reaction>
</comment>
<comment type="catalytic activity">
    <reaction evidence="2">
        <text>xanthosine + phosphate = alpha-D-ribose 1-phosphate + xanthine</text>
        <dbReference type="Rhea" id="RHEA:27638"/>
        <dbReference type="ChEBI" id="CHEBI:17712"/>
        <dbReference type="ChEBI" id="CHEBI:18107"/>
        <dbReference type="ChEBI" id="CHEBI:43474"/>
        <dbReference type="ChEBI" id="CHEBI:57720"/>
        <dbReference type="EC" id="2.4.2.1"/>
    </reaction>
</comment>
<comment type="disruption phenotype">
    <text evidence="2">Cells lacking this gene show a consistent change in xanthine level.</text>
</comment>
<comment type="similarity">
    <text evidence="1">Belongs to the nucleoside phosphorylase PpnP family.</text>
</comment>
<organism>
    <name type="scientific">Escherichia coli (strain K12)</name>
    <dbReference type="NCBI Taxonomy" id="83333"/>
    <lineage>
        <taxon>Bacteria</taxon>
        <taxon>Pseudomonadati</taxon>
        <taxon>Pseudomonadota</taxon>
        <taxon>Gammaproteobacteria</taxon>
        <taxon>Enterobacterales</taxon>
        <taxon>Enterobacteriaceae</taxon>
        <taxon>Escherichia</taxon>
    </lineage>
</organism>
<feature type="chain" id="PRO_0000211763" description="Pyrimidine/purine nucleoside phosphorylase">
    <location>
        <begin position="1"/>
        <end position="94"/>
    </location>
</feature>
<feature type="sequence conflict" description="In Ref. 1; CAA54286." evidence="4" ref="1">
    <original>SEFHLQVAEPTSYLCRYL</original>
    <variation>TVSFICKLPNPPLICAAICNSSPSP</variation>
    <location>
        <begin position="77"/>
        <end position="94"/>
    </location>
</feature>
<feature type="strand" evidence="7">
    <location>
        <begin position="3"/>
        <end position="7"/>
    </location>
</feature>
<feature type="turn" evidence="7">
    <location>
        <begin position="8"/>
        <end position="11"/>
    </location>
</feature>
<feature type="strand" evidence="7">
    <location>
        <begin position="12"/>
        <end position="19"/>
    </location>
</feature>
<feature type="turn" evidence="7">
    <location>
        <begin position="20"/>
        <end position="22"/>
    </location>
</feature>
<feature type="strand" evidence="7">
    <location>
        <begin position="23"/>
        <end position="30"/>
    </location>
</feature>
<feature type="strand" evidence="7">
    <location>
        <begin position="32"/>
        <end position="38"/>
    </location>
</feature>
<feature type="strand" evidence="7">
    <location>
        <begin position="43"/>
        <end position="55"/>
    </location>
</feature>
<feature type="strand" evidence="7">
    <location>
        <begin position="59"/>
        <end position="61"/>
    </location>
</feature>
<feature type="strand" evidence="7">
    <location>
        <begin position="63"/>
        <end position="66"/>
    </location>
</feature>
<feature type="strand" evidence="7">
    <location>
        <begin position="70"/>
        <end position="73"/>
    </location>
</feature>
<feature type="strand" evidence="7">
    <location>
        <begin position="78"/>
        <end position="85"/>
    </location>
</feature>
<feature type="strand" evidence="7">
    <location>
        <begin position="87"/>
        <end position="93"/>
    </location>
</feature>
<name>PPNP_ECOLI</name>
<keyword id="KW-0002">3D-structure</keyword>
<keyword id="KW-0328">Glycosyltransferase</keyword>
<keyword id="KW-1185">Reference proteome</keyword>
<keyword id="KW-0808">Transferase</keyword>
<proteinExistence type="evidence at protein level"/>
<evidence type="ECO:0000255" key="1">
    <source>
        <dbReference type="HAMAP-Rule" id="MF_01537"/>
    </source>
</evidence>
<evidence type="ECO:0000269" key="2">
    <source>
    </source>
</evidence>
<evidence type="ECO:0000303" key="3">
    <source>
    </source>
</evidence>
<evidence type="ECO:0000305" key="4"/>
<evidence type="ECO:0000305" key="5">
    <source>
    </source>
</evidence>
<evidence type="ECO:0000312" key="6">
    <source>
        <dbReference type="EMBL" id="AAC73494.1"/>
    </source>
</evidence>
<evidence type="ECO:0007829" key="7">
    <source>
        <dbReference type="PDB" id="7EYJ"/>
    </source>
</evidence>
<gene>
    <name evidence="3" type="primary">ppnP</name>
    <name evidence="6" type="synonym">yaiE</name>
    <name type="ordered locus">b0391</name>
    <name type="ordered locus">JW0382</name>
</gene>
<sequence length="94" mass="10234">MLQSNEYFSGKVKSIGFSSSSTGRASVGVMVEGEYTFSTAEPEEMTVISGALNVLLPDATDWQVYEAGSVFNVPGHSEFHLQVAEPTSYLCRYL</sequence>
<protein>
    <recommendedName>
        <fullName evidence="1 3">Pyrimidine/purine nucleoside phosphorylase</fullName>
        <ecNumber evidence="1 2">2.4.2.1</ecNumber>
        <ecNumber evidence="1 2">2.4.2.2</ecNumber>
    </recommendedName>
    <alternativeName>
        <fullName evidence="5">Adenosine phosphorylase</fullName>
    </alternativeName>
    <alternativeName>
        <fullName evidence="5">Cytidine phosphorylase</fullName>
    </alternativeName>
    <alternativeName>
        <fullName evidence="5">Guanosine phosphorylase</fullName>
    </alternativeName>
    <alternativeName>
        <fullName evidence="5">Inosine phosphorylase</fullName>
    </alternativeName>
    <alternativeName>
        <fullName evidence="5">Thymidine phosphorylase</fullName>
    </alternativeName>
    <alternativeName>
        <fullName evidence="5">Uridine phosphorylase</fullName>
    </alternativeName>
    <alternativeName>
        <fullName evidence="5">Xanthosine phosphorylase</fullName>
    </alternativeName>
</protein>
<reference key="1">
    <citation type="journal article" date="1996" name="Genetics">
        <title>Recombination-dependent growth in exonuclease-depleted recBC sbcBC strains of Escherichia coli K-12.</title>
        <authorList>
            <person name="Ryder L."/>
            <person name="Sharples G.J."/>
            <person name="Lloyd R.G."/>
        </authorList>
    </citation>
    <scope>NUCLEOTIDE SEQUENCE [GENOMIC DNA]</scope>
    <source>
        <strain>K12</strain>
    </source>
</reference>
<reference key="2">
    <citation type="submission" date="1997-01" db="EMBL/GenBank/DDBJ databases">
        <title>Sequence of minutes 4-25 of Escherichia coli.</title>
        <authorList>
            <person name="Chung E."/>
            <person name="Allen E."/>
            <person name="Araujo R."/>
            <person name="Aparicio A.M."/>
            <person name="Davis K."/>
            <person name="Duncan M."/>
            <person name="Federspiel N."/>
            <person name="Hyman R."/>
            <person name="Kalman S."/>
            <person name="Komp C."/>
            <person name="Kurdi O."/>
            <person name="Lew H."/>
            <person name="Lin D."/>
            <person name="Namath A."/>
            <person name="Oefner P."/>
            <person name="Roberts D."/>
            <person name="Schramm S."/>
            <person name="Davis R.W."/>
        </authorList>
    </citation>
    <scope>NUCLEOTIDE SEQUENCE [LARGE SCALE GENOMIC DNA]</scope>
    <source>
        <strain>K12 / MG1655 / ATCC 47076</strain>
    </source>
</reference>
<reference key="3">
    <citation type="journal article" date="1997" name="Science">
        <title>The complete genome sequence of Escherichia coli K-12.</title>
        <authorList>
            <person name="Blattner F.R."/>
            <person name="Plunkett G. III"/>
            <person name="Bloch C.A."/>
            <person name="Perna N.T."/>
            <person name="Burland V."/>
            <person name="Riley M."/>
            <person name="Collado-Vides J."/>
            <person name="Glasner J.D."/>
            <person name="Rode C.K."/>
            <person name="Mayhew G.F."/>
            <person name="Gregor J."/>
            <person name="Davis N.W."/>
            <person name="Kirkpatrick H.A."/>
            <person name="Goeden M.A."/>
            <person name="Rose D.J."/>
            <person name="Mau B."/>
            <person name="Shao Y."/>
        </authorList>
    </citation>
    <scope>NUCLEOTIDE SEQUENCE [LARGE SCALE GENOMIC DNA]</scope>
    <source>
        <strain>K12 / MG1655 / ATCC 47076</strain>
    </source>
</reference>
<reference key="4">
    <citation type="journal article" date="2006" name="Mol. Syst. Biol.">
        <title>Highly accurate genome sequences of Escherichia coli K-12 strains MG1655 and W3110.</title>
        <authorList>
            <person name="Hayashi K."/>
            <person name="Morooka N."/>
            <person name="Yamamoto Y."/>
            <person name="Fujita K."/>
            <person name="Isono K."/>
            <person name="Choi S."/>
            <person name="Ohtsubo E."/>
            <person name="Baba T."/>
            <person name="Wanner B.L."/>
            <person name="Mori H."/>
            <person name="Horiuchi T."/>
        </authorList>
    </citation>
    <scope>NUCLEOTIDE SEQUENCE [LARGE SCALE GENOMIC DNA]</scope>
    <source>
        <strain>K12 / W3110 / ATCC 27325 / DSM 5911</strain>
    </source>
</reference>
<reference key="5">
    <citation type="journal article" date="2017" name="Nat. Methods">
        <title>Nontargeted in vitro metabolomics for high-throughput identification of novel enzymes in Escherichia coli.</title>
        <authorList>
            <person name="Sevin D.C."/>
            <person name="Fuhrer T."/>
            <person name="Zamboni N."/>
            <person name="Sauer U."/>
        </authorList>
    </citation>
    <scope>FUNCTION</scope>
    <scope>CATALYTIC ACTIVITY</scope>
    <scope>DISRUPTION PHENOTYPE</scope>
    <source>
        <strain>K12</strain>
    </source>
</reference>
<dbReference type="EC" id="2.4.2.1" evidence="1 2"/>
<dbReference type="EC" id="2.4.2.2" evidence="1 2"/>
<dbReference type="EMBL" id="X76979">
    <property type="protein sequence ID" value="CAA54286.1"/>
    <property type="molecule type" value="Genomic_DNA"/>
</dbReference>
<dbReference type="EMBL" id="U73857">
    <property type="protein sequence ID" value="AAB18115.1"/>
    <property type="molecule type" value="Genomic_DNA"/>
</dbReference>
<dbReference type="EMBL" id="U00096">
    <property type="protein sequence ID" value="AAC73494.1"/>
    <property type="molecule type" value="Genomic_DNA"/>
</dbReference>
<dbReference type="EMBL" id="AP009048">
    <property type="protein sequence ID" value="BAE76172.1"/>
    <property type="molecule type" value="Genomic_DNA"/>
</dbReference>
<dbReference type="PIR" id="G64767">
    <property type="entry name" value="G64767"/>
</dbReference>
<dbReference type="RefSeq" id="NP_414925.1">
    <property type="nucleotide sequence ID" value="NC_000913.3"/>
</dbReference>
<dbReference type="RefSeq" id="WP_000941942.1">
    <property type="nucleotide sequence ID" value="NZ_STEB01000007.1"/>
</dbReference>
<dbReference type="PDB" id="7EYJ">
    <property type="method" value="X-ray"/>
    <property type="resolution" value="1.38 A"/>
    <property type="chains" value="A=1-94"/>
</dbReference>
<dbReference type="PDB" id="7EYK">
    <property type="method" value="X-ray"/>
    <property type="resolution" value="1.38 A"/>
    <property type="chains" value="A=1-94"/>
</dbReference>
<dbReference type="PDBsum" id="7EYJ"/>
<dbReference type="PDBsum" id="7EYK"/>
<dbReference type="SMR" id="P0C037"/>
<dbReference type="BioGRID" id="4259817">
    <property type="interactions" value="22"/>
</dbReference>
<dbReference type="BioGRID" id="849437">
    <property type="interactions" value="8"/>
</dbReference>
<dbReference type="FunCoup" id="P0C037">
    <property type="interactions" value="129"/>
</dbReference>
<dbReference type="IntAct" id="P0C037">
    <property type="interactions" value="9"/>
</dbReference>
<dbReference type="STRING" id="511145.b0391"/>
<dbReference type="jPOST" id="P0C037"/>
<dbReference type="PaxDb" id="511145-b0391"/>
<dbReference type="EnsemblBacteria" id="AAC73494">
    <property type="protein sequence ID" value="AAC73494"/>
    <property type="gene ID" value="b0391"/>
</dbReference>
<dbReference type="GeneID" id="93777070"/>
<dbReference type="GeneID" id="945048"/>
<dbReference type="KEGG" id="ecj:JW0382"/>
<dbReference type="KEGG" id="eco:b0391"/>
<dbReference type="KEGG" id="ecoc:C3026_01900"/>
<dbReference type="PATRIC" id="fig|511145.12.peg.403"/>
<dbReference type="EchoBASE" id="EB2079"/>
<dbReference type="eggNOG" id="COG3123">
    <property type="taxonomic scope" value="Bacteria"/>
</dbReference>
<dbReference type="HOGENOM" id="CLU_157874_0_0_6"/>
<dbReference type="InParanoid" id="P0C037"/>
<dbReference type="OMA" id="ADYCCSY"/>
<dbReference type="OrthoDB" id="9793848at2"/>
<dbReference type="PhylomeDB" id="P0C037"/>
<dbReference type="BioCyc" id="EcoCyc:EG12159-MONOMER"/>
<dbReference type="BioCyc" id="MetaCyc:EG12159-MONOMER"/>
<dbReference type="BRENDA" id="2.4.2.2">
    <property type="organism ID" value="2026"/>
</dbReference>
<dbReference type="BRENDA" id="2.4.2.4">
    <property type="organism ID" value="2026"/>
</dbReference>
<dbReference type="PRO" id="PR:P0C037"/>
<dbReference type="Proteomes" id="UP000000625">
    <property type="component" value="Chromosome"/>
</dbReference>
<dbReference type="GO" id="GO:0005829">
    <property type="term" value="C:cytosol"/>
    <property type="evidence" value="ECO:0000314"/>
    <property type="project" value="EcoCyc"/>
</dbReference>
<dbReference type="GO" id="GO:0047975">
    <property type="term" value="F:guanosine phosphorylase activity"/>
    <property type="evidence" value="ECO:0007669"/>
    <property type="project" value="UniProtKB-EC"/>
</dbReference>
<dbReference type="GO" id="GO:0042803">
    <property type="term" value="F:protein homodimerization activity"/>
    <property type="evidence" value="ECO:0000314"/>
    <property type="project" value="EcoCyc"/>
</dbReference>
<dbReference type="GO" id="GO:0004731">
    <property type="term" value="F:purine-nucleoside phosphorylase activity"/>
    <property type="evidence" value="ECO:0000314"/>
    <property type="project" value="EcoCyc"/>
</dbReference>
<dbReference type="GO" id="GO:0016154">
    <property type="term" value="F:pyrimidine-nucleoside phosphorylase activity"/>
    <property type="evidence" value="ECO:0000314"/>
    <property type="project" value="EcoCyc"/>
</dbReference>
<dbReference type="GO" id="GO:0009032">
    <property type="term" value="F:thymidine phosphorylase activity"/>
    <property type="evidence" value="ECO:0007669"/>
    <property type="project" value="UniProtKB-EC"/>
</dbReference>
<dbReference type="GO" id="GO:0004850">
    <property type="term" value="F:uridine phosphorylase activity"/>
    <property type="evidence" value="ECO:0007669"/>
    <property type="project" value="UniProtKB-EC"/>
</dbReference>
<dbReference type="CDD" id="cd20296">
    <property type="entry name" value="cupin_PpnP-like"/>
    <property type="match status" value="1"/>
</dbReference>
<dbReference type="FunFam" id="2.60.120.10:FF:000016">
    <property type="entry name" value="Pyrimidine/purine nucleoside phosphorylase"/>
    <property type="match status" value="1"/>
</dbReference>
<dbReference type="Gene3D" id="2.60.120.10">
    <property type="entry name" value="Jelly Rolls"/>
    <property type="match status" value="1"/>
</dbReference>
<dbReference type="HAMAP" id="MF_01537">
    <property type="entry name" value="Nucleos_phosphorylase_PpnP"/>
    <property type="match status" value="1"/>
</dbReference>
<dbReference type="InterPro" id="IPR009664">
    <property type="entry name" value="Ppnp"/>
</dbReference>
<dbReference type="InterPro" id="IPR014710">
    <property type="entry name" value="RmlC-like_jellyroll"/>
</dbReference>
<dbReference type="InterPro" id="IPR011051">
    <property type="entry name" value="RmlC_Cupin_sf"/>
</dbReference>
<dbReference type="NCBIfam" id="NF007875">
    <property type="entry name" value="PRK10579.1"/>
    <property type="match status" value="1"/>
</dbReference>
<dbReference type="PANTHER" id="PTHR36540">
    <property type="entry name" value="PYRIMIDINE/PURINE NUCLEOSIDE PHOSPHORYLASE"/>
    <property type="match status" value="1"/>
</dbReference>
<dbReference type="PANTHER" id="PTHR36540:SF1">
    <property type="entry name" value="PYRIMIDINE_PURINE NUCLEOSIDE PHOSPHORYLASE"/>
    <property type="match status" value="1"/>
</dbReference>
<dbReference type="Pfam" id="PF06865">
    <property type="entry name" value="Ppnp"/>
    <property type="match status" value="1"/>
</dbReference>
<dbReference type="SUPFAM" id="SSF51182">
    <property type="entry name" value="RmlC-like cupins"/>
    <property type="match status" value="1"/>
</dbReference>